<dbReference type="EMBL" id="BC047067">
    <property type="protein sequence ID" value="AAH47067.1"/>
    <property type="status" value="ALT_SEQ"/>
    <property type="molecule type" value="mRNA"/>
</dbReference>
<dbReference type="EMBL" id="AK017783">
    <property type="protein sequence ID" value="BAB30930.1"/>
    <property type="molecule type" value="mRNA"/>
</dbReference>
<dbReference type="EMBL" id="AK173096">
    <property type="protein sequence ID" value="BAD32374.1"/>
    <property type="molecule type" value="Transcribed_RNA"/>
</dbReference>
<dbReference type="SMR" id="Q811D2"/>
<dbReference type="FunCoup" id="Q811D2">
    <property type="interactions" value="790"/>
</dbReference>
<dbReference type="STRING" id="10090.ENSMUSP00000108449"/>
<dbReference type="iPTMnet" id="Q811D2"/>
<dbReference type="PhosphoSitePlus" id="Q811D2"/>
<dbReference type="PaxDb" id="10090-ENSMUSP00000108449"/>
<dbReference type="ProteomicsDB" id="282119"/>
<dbReference type="AGR" id="MGI:1917887"/>
<dbReference type="MGI" id="MGI:1917887">
    <property type="gene designation" value="Ankrd26"/>
</dbReference>
<dbReference type="eggNOG" id="ENOG502QR0R">
    <property type="taxonomic scope" value="Eukaryota"/>
</dbReference>
<dbReference type="InParanoid" id="Q811D2"/>
<dbReference type="PhylomeDB" id="Q811D2"/>
<dbReference type="Reactome" id="R-MMU-9696264">
    <property type="pathway name" value="RND3 GTPase cycle"/>
</dbReference>
<dbReference type="Reactome" id="R-MMU-9696270">
    <property type="pathway name" value="RND2 GTPase cycle"/>
</dbReference>
<dbReference type="Reactome" id="R-MMU-9696273">
    <property type="pathway name" value="RND1 GTPase cycle"/>
</dbReference>
<dbReference type="ChiTaRS" id="Ankrd26">
    <property type="organism name" value="mouse"/>
</dbReference>
<dbReference type="PRO" id="PR:Q811D2"/>
<dbReference type="Proteomes" id="UP000000589">
    <property type="component" value="Unplaced"/>
</dbReference>
<dbReference type="RNAct" id="Q811D2">
    <property type="molecule type" value="protein"/>
</dbReference>
<dbReference type="GO" id="GO:0015629">
    <property type="term" value="C:actin cytoskeleton"/>
    <property type="evidence" value="ECO:0000314"/>
    <property type="project" value="MGI"/>
</dbReference>
<dbReference type="GO" id="GO:0005829">
    <property type="term" value="C:cytosol"/>
    <property type="evidence" value="ECO:0007669"/>
    <property type="project" value="UniProtKB-SubCell"/>
</dbReference>
<dbReference type="GO" id="GO:0070371">
    <property type="term" value="P:ERK1 and ERK2 cascade"/>
    <property type="evidence" value="ECO:0000315"/>
    <property type="project" value="MGI"/>
</dbReference>
<dbReference type="GO" id="GO:0045444">
    <property type="term" value="P:fat cell differentiation"/>
    <property type="evidence" value="ECO:0000315"/>
    <property type="project" value="MGI"/>
</dbReference>
<dbReference type="GO" id="GO:0042593">
    <property type="term" value="P:glucose homeostasis"/>
    <property type="evidence" value="ECO:0000315"/>
    <property type="project" value="MGI"/>
</dbReference>
<dbReference type="GO" id="GO:0008286">
    <property type="term" value="P:insulin receptor signaling pathway"/>
    <property type="evidence" value="ECO:0000315"/>
    <property type="project" value="MGI"/>
</dbReference>
<dbReference type="GO" id="GO:0070373">
    <property type="term" value="P:negative regulation of ERK1 and ERK2 cascade"/>
    <property type="evidence" value="ECO:0000315"/>
    <property type="project" value="MGI"/>
</dbReference>
<dbReference type="GO" id="GO:0045599">
    <property type="term" value="P:negative regulation of fat cell differentiation"/>
    <property type="evidence" value="ECO:0000315"/>
    <property type="project" value="UniProtKB"/>
</dbReference>
<dbReference type="GO" id="GO:0046627">
    <property type="term" value="P:negative regulation of insulin receptor signaling pathway"/>
    <property type="evidence" value="ECO:0000315"/>
    <property type="project" value="MGI"/>
</dbReference>
<dbReference type="GO" id="GO:0040015">
    <property type="term" value="P:negative regulation of multicellular organism growth"/>
    <property type="evidence" value="ECO:0000315"/>
    <property type="project" value="MGI"/>
</dbReference>
<dbReference type="GO" id="GO:0046621">
    <property type="term" value="P:negative regulation of organ growth"/>
    <property type="evidence" value="ECO:0000315"/>
    <property type="project" value="MGI"/>
</dbReference>
<dbReference type="GO" id="GO:0035265">
    <property type="term" value="P:organ growth"/>
    <property type="evidence" value="ECO:0000315"/>
    <property type="project" value="MGI"/>
</dbReference>
<dbReference type="GO" id="GO:0019217">
    <property type="term" value="P:regulation of fatty acid metabolic process"/>
    <property type="evidence" value="ECO:0000315"/>
    <property type="project" value="MGI"/>
</dbReference>
<dbReference type="GO" id="GO:0060259">
    <property type="term" value="P:regulation of feeding behavior"/>
    <property type="evidence" value="ECO:0000315"/>
    <property type="project" value="MGI"/>
</dbReference>
<dbReference type="GO" id="GO:0019216">
    <property type="term" value="P:regulation of lipid metabolic process"/>
    <property type="evidence" value="ECO:0000315"/>
    <property type="project" value="MGI"/>
</dbReference>
<dbReference type="FunFam" id="1.25.40.20:FF:000208">
    <property type="entry name" value="Ankyrin repeat domain-containing protein 26"/>
    <property type="match status" value="1"/>
</dbReference>
<dbReference type="Gene3D" id="1.25.40.20">
    <property type="entry name" value="Ankyrin repeat-containing domain"/>
    <property type="match status" value="2"/>
</dbReference>
<dbReference type="InterPro" id="IPR050657">
    <property type="entry name" value="Ankyrin_repeat_domain"/>
</dbReference>
<dbReference type="InterPro" id="IPR002110">
    <property type="entry name" value="Ankyrin_rpt"/>
</dbReference>
<dbReference type="InterPro" id="IPR036770">
    <property type="entry name" value="Ankyrin_rpt-contain_sf"/>
</dbReference>
<dbReference type="InterPro" id="IPR039497">
    <property type="entry name" value="CC144C-like_CC_dom"/>
</dbReference>
<dbReference type="InterPro" id="IPR021885">
    <property type="entry name" value="DUF3496"/>
</dbReference>
<dbReference type="PANTHER" id="PTHR24147">
    <property type="entry name" value="ANKYRIN REPEAT DOMAIN 36-RELATED"/>
    <property type="match status" value="1"/>
</dbReference>
<dbReference type="PANTHER" id="PTHR24147:SF60">
    <property type="entry name" value="ANKYRIN REPEAT DOMAIN-CONTAINING PROTEIN 26-RELATED"/>
    <property type="match status" value="1"/>
</dbReference>
<dbReference type="Pfam" id="PF00023">
    <property type="entry name" value="Ank"/>
    <property type="match status" value="2"/>
</dbReference>
<dbReference type="Pfam" id="PF12796">
    <property type="entry name" value="Ank_2"/>
    <property type="match status" value="1"/>
</dbReference>
<dbReference type="Pfam" id="PF14915">
    <property type="entry name" value="CCDC144C"/>
    <property type="match status" value="2"/>
</dbReference>
<dbReference type="Pfam" id="PF12001">
    <property type="entry name" value="DUF3496"/>
    <property type="match status" value="1"/>
</dbReference>
<dbReference type="SMART" id="SM00248">
    <property type="entry name" value="ANK"/>
    <property type="match status" value="4"/>
</dbReference>
<dbReference type="SUPFAM" id="SSF48403">
    <property type="entry name" value="Ankyrin repeat"/>
    <property type="match status" value="1"/>
</dbReference>
<dbReference type="PROSITE" id="PS50297">
    <property type="entry name" value="ANK_REP_REGION"/>
    <property type="match status" value="1"/>
</dbReference>
<dbReference type="PROSITE" id="PS50088">
    <property type="entry name" value="ANK_REPEAT"/>
    <property type="match status" value="4"/>
</dbReference>
<gene>
    <name type="primary">Ankrd26</name>
    <name type="synonym">Kiaa1074</name>
</gene>
<name>ANR26_MOUSE</name>
<reference key="1">
    <citation type="journal article" date="2004" name="Genome Res.">
        <title>The status, quality, and expansion of the NIH full-length cDNA project: the Mammalian Gene Collection (MGC).</title>
        <authorList>
            <consortium name="The MGC Project Team"/>
        </authorList>
    </citation>
    <scope>NUCLEOTIDE SEQUENCE [LARGE SCALE MRNA] OF 1-729</scope>
    <scope>VARIANTS ASN-114; ALA-142 AND ILE-218</scope>
    <source>
        <strain>Czech II</strain>
        <tissue>Mammary tumor</tissue>
    </source>
</reference>
<reference key="2">
    <citation type="journal article" date="2005" name="Science">
        <title>The transcriptional landscape of the mammalian genome.</title>
        <authorList>
            <person name="Carninci P."/>
            <person name="Kasukawa T."/>
            <person name="Katayama S."/>
            <person name="Gough J."/>
            <person name="Frith M.C."/>
            <person name="Maeda N."/>
            <person name="Oyama R."/>
            <person name="Ravasi T."/>
            <person name="Lenhard B."/>
            <person name="Wells C."/>
            <person name="Kodzius R."/>
            <person name="Shimokawa K."/>
            <person name="Bajic V.B."/>
            <person name="Brenner S.E."/>
            <person name="Batalov S."/>
            <person name="Forrest A.R."/>
            <person name="Zavolan M."/>
            <person name="Davis M.J."/>
            <person name="Wilming L.G."/>
            <person name="Aidinis V."/>
            <person name="Allen J.E."/>
            <person name="Ambesi-Impiombato A."/>
            <person name="Apweiler R."/>
            <person name="Aturaliya R.N."/>
            <person name="Bailey T.L."/>
            <person name="Bansal M."/>
            <person name="Baxter L."/>
            <person name="Beisel K.W."/>
            <person name="Bersano T."/>
            <person name="Bono H."/>
            <person name="Chalk A.M."/>
            <person name="Chiu K.P."/>
            <person name="Choudhary V."/>
            <person name="Christoffels A."/>
            <person name="Clutterbuck D.R."/>
            <person name="Crowe M.L."/>
            <person name="Dalla E."/>
            <person name="Dalrymple B.P."/>
            <person name="de Bono B."/>
            <person name="Della Gatta G."/>
            <person name="di Bernardo D."/>
            <person name="Down T."/>
            <person name="Engstrom P."/>
            <person name="Fagiolini M."/>
            <person name="Faulkner G."/>
            <person name="Fletcher C.F."/>
            <person name="Fukushima T."/>
            <person name="Furuno M."/>
            <person name="Futaki S."/>
            <person name="Gariboldi M."/>
            <person name="Georgii-Hemming P."/>
            <person name="Gingeras T.R."/>
            <person name="Gojobori T."/>
            <person name="Green R.E."/>
            <person name="Gustincich S."/>
            <person name="Harbers M."/>
            <person name="Hayashi Y."/>
            <person name="Hensch T.K."/>
            <person name="Hirokawa N."/>
            <person name="Hill D."/>
            <person name="Huminiecki L."/>
            <person name="Iacono M."/>
            <person name="Ikeo K."/>
            <person name="Iwama A."/>
            <person name="Ishikawa T."/>
            <person name="Jakt M."/>
            <person name="Kanapin A."/>
            <person name="Katoh M."/>
            <person name="Kawasawa Y."/>
            <person name="Kelso J."/>
            <person name="Kitamura H."/>
            <person name="Kitano H."/>
            <person name="Kollias G."/>
            <person name="Krishnan S.P."/>
            <person name="Kruger A."/>
            <person name="Kummerfeld S.K."/>
            <person name="Kurochkin I.V."/>
            <person name="Lareau L.F."/>
            <person name="Lazarevic D."/>
            <person name="Lipovich L."/>
            <person name="Liu J."/>
            <person name="Liuni S."/>
            <person name="McWilliam S."/>
            <person name="Madan Babu M."/>
            <person name="Madera M."/>
            <person name="Marchionni L."/>
            <person name="Matsuda H."/>
            <person name="Matsuzawa S."/>
            <person name="Miki H."/>
            <person name="Mignone F."/>
            <person name="Miyake S."/>
            <person name="Morris K."/>
            <person name="Mottagui-Tabar S."/>
            <person name="Mulder N."/>
            <person name="Nakano N."/>
            <person name="Nakauchi H."/>
            <person name="Ng P."/>
            <person name="Nilsson R."/>
            <person name="Nishiguchi S."/>
            <person name="Nishikawa S."/>
            <person name="Nori F."/>
            <person name="Ohara O."/>
            <person name="Okazaki Y."/>
            <person name="Orlando V."/>
            <person name="Pang K.C."/>
            <person name="Pavan W.J."/>
            <person name="Pavesi G."/>
            <person name="Pesole G."/>
            <person name="Petrovsky N."/>
            <person name="Piazza S."/>
            <person name="Reed J."/>
            <person name="Reid J.F."/>
            <person name="Ring B.Z."/>
            <person name="Ringwald M."/>
            <person name="Rost B."/>
            <person name="Ruan Y."/>
            <person name="Salzberg S.L."/>
            <person name="Sandelin A."/>
            <person name="Schneider C."/>
            <person name="Schoenbach C."/>
            <person name="Sekiguchi K."/>
            <person name="Semple C.A."/>
            <person name="Seno S."/>
            <person name="Sessa L."/>
            <person name="Sheng Y."/>
            <person name="Shibata Y."/>
            <person name="Shimada H."/>
            <person name="Shimada K."/>
            <person name="Silva D."/>
            <person name="Sinclair B."/>
            <person name="Sperling S."/>
            <person name="Stupka E."/>
            <person name="Sugiura K."/>
            <person name="Sultana R."/>
            <person name="Takenaka Y."/>
            <person name="Taki K."/>
            <person name="Tammoja K."/>
            <person name="Tan S.L."/>
            <person name="Tang S."/>
            <person name="Taylor M.S."/>
            <person name="Tegner J."/>
            <person name="Teichmann S.A."/>
            <person name="Ueda H.R."/>
            <person name="van Nimwegen E."/>
            <person name="Verardo R."/>
            <person name="Wei C.L."/>
            <person name="Yagi K."/>
            <person name="Yamanishi H."/>
            <person name="Zabarovsky E."/>
            <person name="Zhu S."/>
            <person name="Zimmer A."/>
            <person name="Hide W."/>
            <person name="Bult C."/>
            <person name="Grimmond S.M."/>
            <person name="Teasdale R.D."/>
            <person name="Liu E.T."/>
            <person name="Brusic V."/>
            <person name="Quackenbush J."/>
            <person name="Wahlestedt C."/>
            <person name="Mattick J.S."/>
            <person name="Hume D.A."/>
            <person name="Kai C."/>
            <person name="Sasaki D."/>
            <person name="Tomaru Y."/>
            <person name="Fukuda S."/>
            <person name="Kanamori-Katayama M."/>
            <person name="Suzuki M."/>
            <person name="Aoki J."/>
            <person name="Arakawa T."/>
            <person name="Iida J."/>
            <person name="Imamura K."/>
            <person name="Itoh M."/>
            <person name="Kato T."/>
            <person name="Kawaji H."/>
            <person name="Kawagashira N."/>
            <person name="Kawashima T."/>
            <person name="Kojima M."/>
            <person name="Kondo S."/>
            <person name="Konno H."/>
            <person name="Nakano K."/>
            <person name="Ninomiya N."/>
            <person name="Nishio T."/>
            <person name="Okada M."/>
            <person name="Plessy C."/>
            <person name="Shibata K."/>
            <person name="Shiraki T."/>
            <person name="Suzuki S."/>
            <person name="Tagami M."/>
            <person name="Waki K."/>
            <person name="Watahiki A."/>
            <person name="Okamura-Oho Y."/>
            <person name="Suzuki H."/>
            <person name="Kawai J."/>
            <person name="Hayashizaki Y."/>
        </authorList>
    </citation>
    <scope>NUCLEOTIDE SEQUENCE [LARGE SCALE MRNA] OF 1-528</scope>
    <scope>VARIANTS HIS-399 AND SER-450</scope>
    <source>
        <strain>C57BL/6J</strain>
        <tissue>Mammary tumor</tissue>
    </source>
</reference>
<reference key="3">
    <citation type="journal article" date="2004" name="DNA Res.">
        <title>Prediction of the coding sequences of mouse homologues of KIAA gene: IV. The complete nucleotide sequences of 500 mouse KIAA-homologous cDNAs identified by screening of terminal sequences of cDNA clones randomly sampled from size-fractionated libraries.</title>
        <authorList>
            <person name="Okazaki N."/>
            <person name="Kikuno R."/>
            <person name="Ohara R."/>
            <person name="Inamoto S."/>
            <person name="Koseki H."/>
            <person name="Hiraoka S."/>
            <person name="Saga Y."/>
            <person name="Seino S."/>
            <person name="Nishimura M."/>
            <person name="Kaisho T."/>
            <person name="Hoshino K."/>
            <person name="Kitamura H."/>
            <person name="Nagase T."/>
            <person name="Ohara O."/>
            <person name="Koga H."/>
        </authorList>
    </citation>
    <scope>NUCLEOTIDE SEQUENCE [LARGE SCALE MRNA] OF 539-1581</scope>
    <source>
        <tissue>Fetal brain</tissue>
    </source>
</reference>
<reference key="4">
    <citation type="journal article" date="2006" name="Gene">
        <title>Duplication and extensive remodeling shaped POTE family genes encoding proteins containing ankyrin repeat and coiled coil domains.</title>
        <authorList>
            <person name="Hahn Y."/>
            <person name="Bera T.K."/>
            <person name="Pastan I.H."/>
            <person name="Lee B."/>
        </authorList>
    </citation>
    <scope>IDENTIFICATION</scope>
</reference>
<reference key="5">
    <citation type="journal article" date="2007" name="Proc. Natl. Acad. Sci. U.S.A.">
        <title>Large-scale phosphorylation analysis of mouse liver.</title>
        <authorList>
            <person name="Villen J."/>
            <person name="Beausoleil S.A."/>
            <person name="Gerber S.A."/>
            <person name="Gygi S.P."/>
        </authorList>
    </citation>
    <scope>PHOSPHORYLATION [LARGE SCALE ANALYSIS] AT SER-239</scope>
    <scope>IDENTIFICATION BY MASS SPECTROMETRY [LARGE SCALE ANALYSIS]</scope>
    <source>
        <tissue>Liver</tissue>
    </source>
</reference>
<reference key="6">
    <citation type="journal article" date="2008" name="Proc. Natl. Acad. Sci. U.S.A.">
        <title>A model for obesity and gigantism due to disruption of the Ankrd26 gene.</title>
        <authorList>
            <person name="Bera T.K."/>
            <person name="Liu X.F."/>
            <person name="Yamada M."/>
            <person name="Gavrilova O."/>
            <person name="Mezey E."/>
            <person name="Tessarollo L."/>
            <person name="Anver M."/>
            <person name="Hahn Y."/>
            <person name="Lee B."/>
            <person name="Pastan I."/>
        </authorList>
    </citation>
    <scope>DISRUPTION PHENOTYPE</scope>
    <scope>TISSUE SPECIFICITY</scope>
    <scope>SUBCELLULAR LOCATION</scope>
</reference>
<reference key="7">
    <citation type="journal article" date="2012" name="PLoS ONE">
        <title>ANKRD26 and its interacting partners TRIO, GPS2, HMMR and DIPA regulate adipogenesis in 3T3-L1 cells.</title>
        <authorList>
            <person name="Liu X.F."/>
            <person name="Bera T.K."/>
            <person name="Kahue C."/>
            <person name="Escobar T."/>
            <person name="Fei Z."/>
            <person name="Raciti G.A."/>
            <person name="Pastan I."/>
        </authorList>
    </citation>
    <scope>FUNCTION</scope>
</reference>
<reference key="8">
    <citation type="journal article" date="2015" name="Brain Struct. Funct.">
        <title>A novel form of ciliopathy underlies hyperphagia and obesity in Ankrd26 knockout mice.</title>
        <authorList>
            <person name="Acs P."/>
            <person name="Bauer P.O."/>
            <person name="Mayer B."/>
            <person name="Bera T."/>
            <person name="Macallister R."/>
            <person name="Mezey E."/>
            <person name="Pastan I."/>
        </authorList>
    </citation>
    <scope>DISRUPTION PHENOTYPE</scope>
    <scope>FUNCTION</scope>
    <scope>TISSUE SPECIFICITY</scope>
</reference>
<organism>
    <name type="scientific">Mus musculus</name>
    <name type="common">Mouse</name>
    <dbReference type="NCBI Taxonomy" id="10090"/>
    <lineage>
        <taxon>Eukaryota</taxon>
        <taxon>Metazoa</taxon>
        <taxon>Chordata</taxon>
        <taxon>Craniata</taxon>
        <taxon>Vertebrata</taxon>
        <taxon>Euteleostomi</taxon>
        <taxon>Mammalia</taxon>
        <taxon>Eutheria</taxon>
        <taxon>Euarchontoglires</taxon>
        <taxon>Glires</taxon>
        <taxon>Rodentia</taxon>
        <taxon>Myomorpha</taxon>
        <taxon>Muroidea</taxon>
        <taxon>Muridae</taxon>
        <taxon>Murinae</taxon>
        <taxon>Mus</taxon>
        <taxon>Mus</taxon>
    </lineage>
</organism>
<protein>
    <recommendedName>
        <fullName>Ankyrin repeat domain-containing protein 26</fullName>
    </recommendedName>
</protein>
<proteinExistence type="evidence at protein level"/>
<accession>Q811D2</accession>
<accession>Q69ZS2</accession>
<accession>Q9CS61</accession>
<keyword id="KW-0040">ANK repeat</keyword>
<keyword id="KW-0175">Coiled coil</keyword>
<keyword id="KW-0963">Cytoplasm</keyword>
<keyword id="KW-0597">Phosphoprotein</keyword>
<keyword id="KW-1185">Reference proteome</keyword>
<keyword id="KW-0677">Repeat</keyword>
<comment type="function">
    <text evidence="7 8">Acts as a regulator of adipogenesis. Involved in the regulation of the feeding behavior.</text>
</comment>
<comment type="subunit">
    <text evidence="1">Interacts with TRIO. Interacts with GPS2. Interacts with CCDC85B. Interacts with HMMR.</text>
</comment>
<comment type="subcellular location">
    <subcellularLocation>
        <location evidence="6">Cytoplasm</location>
        <location evidence="6">Cytosol</location>
    </subcellularLocation>
    <text evidence="6">Located just near the plasma membrane in close association with filamentous actin.</text>
</comment>
<comment type="tissue specificity">
    <text evidence="6 8">Widely expressed (PubMed:18162531). Expressed in the arcuate and ventromedial nuclei within the hypothalamus and in the ependyma and the circumventricular organs (at protein level) (PubMed:18162531).</text>
</comment>
<comment type="disruption phenotype">
    <text evidence="6 8">Deficient mice display hyperphagia, severe obesity, gigantism, insulin resistance and elevated serum leptin levels potentially linked to defects in primary cilia (PubMed:18162531, PubMed:24633808).</text>
</comment>
<feature type="chain" id="PRO_0000240844" description="Ankyrin repeat domain-containing protein 26">
    <location>
        <begin position="1"/>
        <end position="1581"/>
    </location>
</feature>
<feature type="repeat" description="ANK 1">
    <location>
        <begin position="46"/>
        <end position="76"/>
    </location>
</feature>
<feature type="repeat" description="ANK 2">
    <location>
        <begin position="80"/>
        <end position="109"/>
    </location>
</feature>
<feature type="repeat" description="ANK 3">
    <location>
        <begin position="113"/>
        <end position="142"/>
    </location>
</feature>
<feature type="repeat" description="ANK 4">
    <location>
        <begin position="146"/>
        <end position="175"/>
    </location>
</feature>
<feature type="repeat" description="ANK 5">
    <location>
        <begin position="179"/>
        <end position="208"/>
    </location>
</feature>
<feature type="region of interest" description="Disordered" evidence="3">
    <location>
        <begin position="1"/>
        <end position="22"/>
    </location>
</feature>
<feature type="region of interest" description="Disordered" evidence="3">
    <location>
        <begin position="225"/>
        <end position="270"/>
    </location>
</feature>
<feature type="region of interest" description="Disordered" evidence="3">
    <location>
        <begin position="299"/>
        <end position="343"/>
    </location>
</feature>
<feature type="region of interest" description="Disordered" evidence="3">
    <location>
        <begin position="361"/>
        <end position="381"/>
    </location>
</feature>
<feature type="region of interest" description="Disordered" evidence="3">
    <location>
        <begin position="488"/>
        <end position="652"/>
    </location>
</feature>
<feature type="coiled-coil region" evidence="2">
    <location>
        <begin position="715"/>
        <end position="845"/>
    </location>
</feature>
<feature type="coiled-coil region" evidence="2">
    <location>
        <begin position="876"/>
        <end position="1345"/>
    </location>
</feature>
<feature type="coiled-coil region" evidence="2">
    <location>
        <begin position="1396"/>
        <end position="1470"/>
    </location>
</feature>
<feature type="coiled-coil region" evidence="2">
    <location>
        <begin position="1521"/>
        <end position="1550"/>
    </location>
</feature>
<feature type="compositionally biased region" description="Polar residues" evidence="3">
    <location>
        <begin position="229"/>
        <end position="250"/>
    </location>
</feature>
<feature type="compositionally biased region" description="Acidic residues" evidence="3">
    <location>
        <begin position="308"/>
        <end position="319"/>
    </location>
</feature>
<feature type="compositionally biased region" description="Polar residues" evidence="3">
    <location>
        <begin position="327"/>
        <end position="337"/>
    </location>
</feature>
<feature type="compositionally biased region" description="Basic and acidic residues" evidence="3">
    <location>
        <begin position="367"/>
        <end position="381"/>
    </location>
</feature>
<feature type="compositionally biased region" description="Polar residues" evidence="3">
    <location>
        <begin position="491"/>
        <end position="504"/>
    </location>
</feature>
<feature type="compositionally biased region" description="Basic and acidic residues" evidence="3">
    <location>
        <begin position="505"/>
        <end position="516"/>
    </location>
</feature>
<feature type="compositionally biased region" description="Basic and acidic residues" evidence="3">
    <location>
        <begin position="524"/>
        <end position="538"/>
    </location>
</feature>
<feature type="compositionally biased region" description="Basic and acidic residues" evidence="3">
    <location>
        <begin position="585"/>
        <end position="601"/>
    </location>
</feature>
<feature type="modified residue" description="Phosphoserine" evidence="1">
    <location>
        <position position="13"/>
    </location>
</feature>
<feature type="modified residue" description="Phosphoserine" evidence="10">
    <location>
        <position position="239"/>
    </location>
</feature>
<feature type="modified residue" description="Phosphoserine" evidence="1">
    <location>
        <position position="260"/>
    </location>
</feature>
<feature type="modified residue" description="Phosphoserine" evidence="1">
    <location>
        <position position="511"/>
    </location>
</feature>
<feature type="sequence variant" evidence="4">
    <original>S</original>
    <variation>N</variation>
    <location>
        <position position="114"/>
    </location>
</feature>
<feature type="sequence variant" evidence="4">
    <original>V</original>
    <variation>A</variation>
    <location>
        <position position="142"/>
    </location>
</feature>
<feature type="sequence variant" evidence="4">
    <original>M</original>
    <variation>I</variation>
    <location>
        <position position="218"/>
    </location>
</feature>
<feature type="sequence variant" evidence="5">
    <original>D</original>
    <variation>H</variation>
    <location>
        <position position="399"/>
    </location>
</feature>
<feature type="sequence variant" evidence="5">
    <original>N</original>
    <variation>S</variation>
    <location>
        <position position="450"/>
    </location>
</feature>
<feature type="sequence conflict" description="In Ref. 2; BAB30930." evidence="9" ref="2">
    <original>M</original>
    <variation>MGMEKN</variation>
    <location>
        <position position="469"/>
    </location>
</feature>
<feature type="sequence conflict" description="In Ref. 2; BAB30930." evidence="9" ref="2">
    <original>V</original>
    <variation>A</variation>
    <location>
        <position position="476"/>
    </location>
</feature>
<feature type="sequence conflict" description="In Ref. 2; BAB30930." evidence="9" ref="2">
    <original>K</original>
    <variation>R</variation>
    <location>
        <position position="527"/>
    </location>
</feature>
<feature type="sequence conflict" description="In Ref. 1; AAH47067." evidence="9" ref="1">
    <original>A</original>
    <variation>V</variation>
    <location>
        <position position="601"/>
    </location>
</feature>
<feature type="sequence conflict" description="In Ref. 1; AAH47067." evidence="9" ref="1">
    <original>A</original>
    <variation>T</variation>
    <location>
        <position position="604"/>
    </location>
</feature>
<evidence type="ECO:0000250" key="1">
    <source>
        <dbReference type="UniProtKB" id="Q9UPS8"/>
    </source>
</evidence>
<evidence type="ECO:0000255" key="2"/>
<evidence type="ECO:0000256" key="3">
    <source>
        <dbReference type="SAM" id="MobiDB-lite"/>
    </source>
</evidence>
<evidence type="ECO:0000269" key="4">
    <source>
    </source>
</evidence>
<evidence type="ECO:0000269" key="5">
    <source>
    </source>
</evidence>
<evidence type="ECO:0000269" key="6">
    <source>
    </source>
</evidence>
<evidence type="ECO:0000269" key="7">
    <source>
    </source>
</evidence>
<evidence type="ECO:0000269" key="8">
    <source>
    </source>
</evidence>
<evidence type="ECO:0000305" key="9"/>
<evidence type="ECO:0007744" key="10">
    <source>
    </source>
</evidence>
<sequence length="1581" mass="180647">MKKIFGFRSKGPSPLGPSARPRSNCVGFGRESASGSHVPRYHIHDKDMGKIHKAASVGDVAKVQHILILGKSGVNDRDKKDRTALHLACAYGHPEVVTLLVERKCEIDARDSESSTALIKAVQCQEEECAAILLDHGADPNVMDSSGNTALHYAVYSENTSMAAKLLAHNANIEAKNKDDLTPMLLAVKENKQHIVEFLVKKKASIHAVDQLGSNRQMFEYDGKRLQRSENSNPVDNGSEDGSLTRSYNTPGPADSWPTSDEEDYNFDNKNVPKINLTELWTAAQQSRKNQTKCGFEELDNGARFDDSDSPSESEDAIEVEPAPSVRVQTLSPSRQSPDPVEGATELAIEGEENGTDVIESASQEQPNHDNLTRADGWHKSNKSEMMSALGLGEDEDEDSPWDSESISESVSLKDVGHFSGTADQTGKRRAHGQIEDVTYIPSCMSGSRNFKMAKLEESRNVGLPVAHMEAPRKYVIMEPTIERRAPVLNKTETVGMTDAQTFKSEPESVSREEQTRLSGSEDSQQKVEEKRKYKNNEAEPSGNLYSGAADGGADVKPQSGDTENQQSPREGSEGRGSGPALLMKEAKKMENEKWVSREPARTAMSERTGLPTGGWPQMQDGSCWSDTDQSEARPTKKTSSKHNKDSGQTAAVDNLDDFTESSETASEDHELQGPDSESILCAIEHLRLECKDTASLLKIRDAVYSYKRLIELKRSHCELLTGKLKRMENKYKGLQKEMSETEEVKSRLEHEKVGWEQELCRLRFALKQEEEKRRSADQLSEKTMEQLRRKGEQCQSEVEARQQLEASLRTLEMELKTVKSHLNQVLEERNETQRQLSREQNARMLQDGILASHLCKQKEIEMTQKKMTSEVSVSHEKEKDLLHKNQRLQDEVAVLRLEMDTIKSHNQEKEKRYLEDIKIANEKNDNLQRMVKLNMLSSKLDNEKQNKERLETDVESFRSRLASALHDHAEIQTAKRDLEIAFQRARDEWFRVKDKMNFDMSNLRDNNEVLSQQLSKTERKLNSLEIEFHHTKDELREKTLALKHAQRDLSQTQCQMKEVEHMFQDEQGKVSKFMGKQESIEERLAQLQSENTLLRQQLDDAANKAESKDKTIVNIQDQFQDVLTRFQAESQRHSLRLEDRNQELVSECSHLRERLCQYENEKAEREVVVRQLQQELADTLKKQSMSEASLEVSSRYRSNLEEEARDLKKKLGQLRSQLQEARDQHREAVHHAEKMEDHLQKLELEKSKFEITIKKQSEEIDQLQENLSRVNLSEEDKEKLQKLTELKESLECTVDQEQKRSSALEKELMRTIQKKCGKLEKNKKQLEQEVVNLRSHMEKNMVEHSQAQQYAREVEERARQDLVEKLKQVNLFLQAQAASQESLEQLRENSNASVRSQMELRIKDLESQLYRMKAQEDFDKIELEKYKQLYQEEFRARKSLSSKLNKTSEKLEEASSKLLLEEQQNRSLLSTLSTRPVVECPCVGSLHNSLVFNRTLIPRENIVVPTSGLQPSNKRVEIYLTKMHQELEKSINRELKEATAELESEFCRVSPLGSATKASQDQLSDASQEFIDILKKKYMI</sequence>